<feature type="chain" id="PRO_0000420874" description="Phosphate-specific transport system accessory protein PhoU">
    <location>
        <begin position="1"/>
        <end position="243"/>
    </location>
</feature>
<sequence length="243" mass="27594">MENLNLNKHISGQFNAELENIRTQVLSMGGLVEQQLTDAITAMHNQDSELATRVIEGDSKVNLMEVTIDEACVRIIAKRQPTASDLRLVMAIIKTISELERIGDVADKICRTALEKFSHQHQPLLVSLESLGRHTVQMLHDVLDAFARMDLDEAIRIYREDKKVDKEYEGIVRQLMTHMMEDSRTIPSVLTALFCARSIERIGDRCQNICEFIFYFVKGQDVRHMGGDALEKLLIASDXKKAK</sequence>
<proteinExistence type="inferred from homology"/>
<protein>
    <recommendedName>
        <fullName evidence="3 7">Phosphate-specific transport system accessory protein PhoU</fullName>
        <shortName evidence="3">Pst system accessory protein PhoU</shortName>
    </recommendedName>
</protein>
<evidence type="ECO:0000250" key="1"/>
<evidence type="ECO:0000250" key="2">
    <source>
        <dbReference type="UniProtKB" id="O67053"/>
    </source>
</evidence>
<evidence type="ECO:0000250" key="3">
    <source>
        <dbReference type="UniProtKB" id="P0A9K7"/>
    </source>
</evidence>
<evidence type="ECO:0000255" key="4"/>
<evidence type="ECO:0000269" key="5">
    <source>
    </source>
</evidence>
<evidence type="ECO:0000269" key="6">
    <source>
    </source>
</evidence>
<evidence type="ECO:0000312" key="7">
    <source>
        <dbReference type="EMBL" id="CAR92143.1"/>
    </source>
</evidence>
<accession>B6ZCF1</accession>
<keyword id="KW-0963">Cytoplasm</keyword>
<keyword id="KW-0592">Phosphate transport</keyword>
<keyword id="KW-0813">Transport</keyword>
<reference evidence="7" key="1">
    <citation type="journal article" date="2003" name="Mol. Microbiol.">
        <title>Phosphate availability regulates biosynthesis of two antibiotics, prodigiosin and carbapenem, in Serratia via both quorum-sensing-dependent and -independent pathways.</title>
        <authorList>
            <person name="Slater H."/>
            <person name="Crow M."/>
            <person name="Everson L."/>
            <person name="Salmond G.P.C."/>
        </authorList>
    </citation>
    <scope>NUCLEOTIDE SEQUENCE [GENOMIC DNA]</scope>
    <source>
        <strain evidence="5">ATCC 39006 / SC 11482</strain>
    </source>
</reference>
<reference evidence="7" key="2">
    <citation type="journal article" date="2009" name="BMC Microbiol.">
        <title>The PhoBR two-component system regulates antibiotic biosynthesis in Serratia in response to phosphate.</title>
        <authorList>
            <person name="Gristwood T."/>
            <person name="Fineran P.C."/>
            <person name="Everson L."/>
            <person name="Williamson N.R."/>
            <person name="Salmond G.P."/>
        </authorList>
    </citation>
    <scope>NUCLEOTIDE SEQUENCE [GENOMIC DNA]</scope>
    <scope>OPERON STRUCTURE</scope>
    <source>
        <strain evidence="6">ATCC 39006 / SC 11482</strain>
    </source>
</reference>
<dbReference type="EMBL" id="FM244836">
    <property type="protein sequence ID" value="CAR92143.1"/>
    <property type="molecule type" value="Genomic_DNA"/>
</dbReference>
<dbReference type="STRING" id="273526.SMDB11_4138"/>
<dbReference type="GO" id="GO:0005737">
    <property type="term" value="C:cytoplasm"/>
    <property type="evidence" value="ECO:0000250"/>
    <property type="project" value="UniProtKB"/>
</dbReference>
<dbReference type="GO" id="GO:0042803">
    <property type="term" value="F:protein homodimerization activity"/>
    <property type="evidence" value="ECO:0000250"/>
    <property type="project" value="UniProtKB"/>
</dbReference>
<dbReference type="GO" id="GO:0030643">
    <property type="term" value="P:intracellular phosphate ion homeostasis"/>
    <property type="evidence" value="ECO:0007669"/>
    <property type="project" value="InterPro"/>
</dbReference>
<dbReference type="GO" id="GO:0010629">
    <property type="term" value="P:negative regulation of gene expression"/>
    <property type="evidence" value="ECO:0000250"/>
    <property type="project" value="UniProtKB"/>
</dbReference>
<dbReference type="GO" id="GO:0045936">
    <property type="term" value="P:negative regulation of phosphate metabolic process"/>
    <property type="evidence" value="ECO:0000250"/>
    <property type="project" value="UniProtKB"/>
</dbReference>
<dbReference type="GO" id="GO:2000186">
    <property type="term" value="P:negative regulation of phosphate transmembrane transport"/>
    <property type="evidence" value="ECO:0000250"/>
    <property type="project" value="UniProtKB"/>
</dbReference>
<dbReference type="GO" id="GO:0006817">
    <property type="term" value="P:phosphate ion transport"/>
    <property type="evidence" value="ECO:0007669"/>
    <property type="project" value="UniProtKB-KW"/>
</dbReference>
<dbReference type="GO" id="GO:0019220">
    <property type="term" value="P:regulation of phosphate metabolic process"/>
    <property type="evidence" value="ECO:0000317"/>
    <property type="project" value="UniProtKB"/>
</dbReference>
<dbReference type="FunFam" id="1.20.58.220:FF:000001">
    <property type="entry name" value="Phosphate-specific transport system accessory protein PhoU"/>
    <property type="match status" value="1"/>
</dbReference>
<dbReference type="FunFam" id="1.20.58.220:FF:000002">
    <property type="entry name" value="Phosphate-specific transport system accessory protein PhoU"/>
    <property type="match status" value="1"/>
</dbReference>
<dbReference type="Gene3D" id="1.20.58.220">
    <property type="entry name" value="Phosphate transport system protein phou homolog 2, domain 2"/>
    <property type="match status" value="2"/>
</dbReference>
<dbReference type="InterPro" id="IPR028366">
    <property type="entry name" value="P_transport_PhoU"/>
</dbReference>
<dbReference type="InterPro" id="IPR038078">
    <property type="entry name" value="PhoU-like_sf"/>
</dbReference>
<dbReference type="InterPro" id="IPR026022">
    <property type="entry name" value="PhoU_dom"/>
</dbReference>
<dbReference type="NCBIfam" id="TIGR02135">
    <property type="entry name" value="phoU_full"/>
    <property type="match status" value="1"/>
</dbReference>
<dbReference type="NCBIfam" id="NF008332">
    <property type="entry name" value="PRK11115.1"/>
    <property type="match status" value="1"/>
</dbReference>
<dbReference type="PANTHER" id="PTHR42930">
    <property type="entry name" value="PHOSPHATE-SPECIFIC TRANSPORT SYSTEM ACCESSORY PROTEIN PHOU"/>
    <property type="match status" value="1"/>
</dbReference>
<dbReference type="PANTHER" id="PTHR42930:SF3">
    <property type="entry name" value="PHOSPHATE-SPECIFIC TRANSPORT SYSTEM ACCESSORY PROTEIN PHOU"/>
    <property type="match status" value="1"/>
</dbReference>
<dbReference type="Pfam" id="PF01895">
    <property type="entry name" value="PhoU"/>
    <property type="match status" value="2"/>
</dbReference>
<dbReference type="PIRSF" id="PIRSF003107">
    <property type="entry name" value="PhoU"/>
    <property type="match status" value="1"/>
</dbReference>
<dbReference type="SUPFAM" id="SSF109755">
    <property type="entry name" value="PhoU-like"/>
    <property type="match status" value="1"/>
</dbReference>
<gene>
    <name evidence="7" type="primary">phoU</name>
</gene>
<name>PHOU_SERMA</name>
<organism>
    <name type="scientific">Serratia marcescens</name>
    <dbReference type="NCBI Taxonomy" id="615"/>
    <lineage>
        <taxon>Bacteria</taxon>
        <taxon>Pseudomonadati</taxon>
        <taxon>Pseudomonadota</taxon>
        <taxon>Gammaproteobacteria</taxon>
        <taxon>Enterobacterales</taxon>
        <taxon>Yersiniaceae</taxon>
        <taxon>Serratia</taxon>
    </lineage>
</organism>
<comment type="function">
    <text evidence="1">Part of the phosphate (Pho) regulon, which plays a key role in phosphate homeostasis. Encoded together with proteins of the phosphate-specific transport (Pst) system in the polycistronic pstSCAB-phoU operon. PhoU is essential for the repression of the Pho regulon at high phosphate conditions. In this role, it may bind, possibly as a chaperone, to PhoR, PhoB or a PhoR-PhoB complex to promote dephosphorylation of phospho-PhoB, or inhibit formation of the PhoR-PhoB transitory complex (By similarity).</text>
</comment>
<comment type="subunit">
    <text evidence="2">Homodimer.</text>
</comment>
<comment type="subcellular location">
    <subcellularLocation>
        <location evidence="3">Cytoplasm</location>
    </subcellularLocation>
</comment>
<comment type="similarity">
    <text evidence="4">Belongs to the PhoU family.</text>
</comment>